<sequence>MGKLLYHKIYDSHVIHEDTNDDPILYIDRHLLHEVTSPQAFESIRFKNRKIRRPNKTFATMDHNVPTIMQNIHSIEGMSKIQLNQLTKNCKDFNITLFDLSHPHQGIIHVLAPEQGIILPGMTVVCGDSHTSTHGAFGALSFGIGTSEIEHVLVTQTLRQPKYKSMGINLFGTIPPYITAKDLILFIIGKIGHGGASGYIVEFYGDVINTLSMEERMTICNMSIEMGAASALIAPDVTTYNYLKNKKFSPNKTHWNQALLFWNTLHSDHDTNFDKIFNFDISNIKPQITWGTNPSQVISIDQPIPKLEIFTDPIERKSVIQALNYMKLTPNTYLTNISIDKVFIGSCTNSRIEDLRSAANIIKDHKISNNVHAIVVPGSKPVKKQAEKEGLDSIFIKAGFEWRLPGCSMCLGMNEDRLNAGERCASTSNRNFEGRQGRGGLTHLVSPAMAAAAAIAGHFVDIRTYF</sequence>
<gene>
    <name evidence="1" type="primary">leuC</name>
    <name type="ordered locus">Bfl131</name>
</gene>
<keyword id="KW-0004">4Fe-4S</keyword>
<keyword id="KW-0028">Amino-acid biosynthesis</keyword>
<keyword id="KW-0100">Branched-chain amino acid biosynthesis</keyword>
<keyword id="KW-0408">Iron</keyword>
<keyword id="KW-0411">Iron-sulfur</keyword>
<keyword id="KW-0432">Leucine biosynthesis</keyword>
<keyword id="KW-0456">Lyase</keyword>
<keyword id="KW-0479">Metal-binding</keyword>
<keyword id="KW-1185">Reference proteome</keyword>
<evidence type="ECO:0000255" key="1">
    <source>
        <dbReference type="HAMAP-Rule" id="MF_01026"/>
    </source>
</evidence>
<accession>Q7VQJ8</accession>
<proteinExistence type="inferred from homology"/>
<dbReference type="EC" id="4.2.1.33" evidence="1"/>
<dbReference type="EMBL" id="BX248583">
    <property type="protein sequence ID" value="CAD83652.1"/>
    <property type="molecule type" value="Genomic_DNA"/>
</dbReference>
<dbReference type="SMR" id="Q7VQJ8"/>
<dbReference type="STRING" id="203907.Bfl131"/>
<dbReference type="KEGG" id="bfl:Bfl131"/>
<dbReference type="eggNOG" id="COG0065">
    <property type="taxonomic scope" value="Bacteria"/>
</dbReference>
<dbReference type="HOGENOM" id="CLU_006714_3_4_6"/>
<dbReference type="OrthoDB" id="9802769at2"/>
<dbReference type="UniPathway" id="UPA00048">
    <property type="reaction ID" value="UER00071"/>
</dbReference>
<dbReference type="Proteomes" id="UP000002192">
    <property type="component" value="Chromosome"/>
</dbReference>
<dbReference type="GO" id="GO:0003861">
    <property type="term" value="F:3-isopropylmalate dehydratase activity"/>
    <property type="evidence" value="ECO:0007669"/>
    <property type="project" value="UniProtKB-UniRule"/>
</dbReference>
<dbReference type="GO" id="GO:0051539">
    <property type="term" value="F:4 iron, 4 sulfur cluster binding"/>
    <property type="evidence" value="ECO:0007669"/>
    <property type="project" value="UniProtKB-KW"/>
</dbReference>
<dbReference type="GO" id="GO:0046872">
    <property type="term" value="F:metal ion binding"/>
    <property type="evidence" value="ECO:0007669"/>
    <property type="project" value="UniProtKB-KW"/>
</dbReference>
<dbReference type="GO" id="GO:0009098">
    <property type="term" value="P:L-leucine biosynthetic process"/>
    <property type="evidence" value="ECO:0007669"/>
    <property type="project" value="UniProtKB-UniRule"/>
</dbReference>
<dbReference type="CDD" id="cd01583">
    <property type="entry name" value="IPMI"/>
    <property type="match status" value="1"/>
</dbReference>
<dbReference type="FunFam" id="3.30.499.10:FF:000007">
    <property type="entry name" value="3-isopropylmalate dehydratase large subunit"/>
    <property type="match status" value="1"/>
</dbReference>
<dbReference type="Gene3D" id="3.30.499.10">
    <property type="entry name" value="Aconitase, domain 3"/>
    <property type="match status" value="2"/>
</dbReference>
<dbReference type="HAMAP" id="MF_01026">
    <property type="entry name" value="LeuC_type1"/>
    <property type="match status" value="1"/>
</dbReference>
<dbReference type="InterPro" id="IPR004430">
    <property type="entry name" value="3-IsopropMal_deHydase_lsu"/>
</dbReference>
<dbReference type="InterPro" id="IPR015931">
    <property type="entry name" value="Acnase/IPM_dHydase_lsu_aba_1/3"/>
</dbReference>
<dbReference type="InterPro" id="IPR001030">
    <property type="entry name" value="Acoase/IPM_deHydtase_lsu_aba"/>
</dbReference>
<dbReference type="InterPro" id="IPR018136">
    <property type="entry name" value="Aconitase_4Fe-4S_BS"/>
</dbReference>
<dbReference type="InterPro" id="IPR036008">
    <property type="entry name" value="Aconitase_4Fe-4S_dom"/>
</dbReference>
<dbReference type="InterPro" id="IPR050067">
    <property type="entry name" value="IPM_dehydratase_rel_enz"/>
</dbReference>
<dbReference type="InterPro" id="IPR033941">
    <property type="entry name" value="IPMI_cat"/>
</dbReference>
<dbReference type="NCBIfam" id="TIGR00170">
    <property type="entry name" value="leuC"/>
    <property type="match status" value="1"/>
</dbReference>
<dbReference type="NCBIfam" id="NF004016">
    <property type="entry name" value="PRK05478.1"/>
    <property type="match status" value="1"/>
</dbReference>
<dbReference type="NCBIfam" id="NF009116">
    <property type="entry name" value="PRK12466.1"/>
    <property type="match status" value="1"/>
</dbReference>
<dbReference type="PANTHER" id="PTHR43822:SF9">
    <property type="entry name" value="3-ISOPROPYLMALATE DEHYDRATASE"/>
    <property type="match status" value="1"/>
</dbReference>
<dbReference type="PANTHER" id="PTHR43822">
    <property type="entry name" value="HOMOACONITASE, MITOCHONDRIAL-RELATED"/>
    <property type="match status" value="1"/>
</dbReference>
<dbReference type="Pfam" id="PF00330">
    <property type="entry name" value="Aconitase"/>
    <property type="match status" value="1"/>
</dbReference>
<dbReference type="PRINTS" id="PR00415">
    <property type="entry name" value="ACONITASE"/>
</dbReference>
<dbReference type="SUPFAM" id="SSF53732">
    <property type="entry name" value="Aconitase iron-sulfur domain"/>
    <property type="match status" value="1"/>
</dbReference>
<dbReference type="PROSITE" id="PS00450">
    <property type="entry name" value="ACONITASE_1"/>
    <property type="match status" value="1"/>
</dbReference>
<dbReference type="PROSITE" id="PS01244">
    <property type="entry name" value="ACONITASE_2"/>
    <property type="match status" value="1"/>
</dbReference>
<name>LEUC_BLOFL</name>
<reference key="1">
    <citation type="journal article" date="2003" name="Proc. Natl. Acad. Sci. U.S.A.">
        <title>The genome sequence of Blochmannia floridanus: comparative analysis of reduced genomes.</title>
        <authorList>
            <person name="Gil R."/>
            <person name="Silva F.J."/>
            <person name="Zientz E."/>
            <person name="Delmotte F."/>
            <person name="Gonzalez-Candelas F."/>
            <person name="Latorre A."/>
            <person name="Rausell C."/>
            <person name="Kamerbeek J."/>
            <person name="Gadau J."/>
            <person name="Hoelldobler B."/>
            <person name="van Ham R.C.H.J."/>
            <person name="Gross R."/>
            <person name="Moya A."/>
        </authorList>
    </citation>
    <scope>NUCLEOTIDE SEQUENCE [LARGE SCALE GENOMIC DNA]</scope>
</reference>
<feature type="chain" id="PRO_0000076706" description="3-isopropylmalate dehydratase large subunit">
    <location>
        <begin position="1"/>
        <end position="466"/>
    </location>
</feature>
<feature type="binding site" evidence="1">
    <location>
        <position position="347"/>
    </location>
    <ligand>
        <name>[4Fe-4S] cluster</name>
        <dbReference type="ChEBI" id="CHEBI:49883"/>
    </ligand>
</feature>
<feature type="binding site" evidence="1">
    <location>
        <position position="407"/>
    </location>
    <ligand>
        <name>[4Fe-4S] cluster</name>
        <dbReference type="ChEBI" id="CHEBI:49883"/>
    </ligand>
</feature>
<feature type="binding site" evidence="1">
    <location>
        <position position="410"/>
    </location>
    <ligand>
        <name>[4Fe-4S] cluster</name>
        <dbReference type="ChEBI" id="CHEBI:49883"/>
    </ligand>
</feature>
<comment type="function">
    <text evidence="1">Catalyzes the isomerization between 2-isopropylmalate and 3-isopropylmalate, via the formation of 2-isopropylmaleate.</text>
</comment>
<comment type="catalytic activity">
    <reaction evidence="1">
        <text>(2R,3S)-3-isopropylmalate = (2S)-2-isopropylmalate</text>
        <dbReference type="Rhea" id="RHEA:32287"/>
        <dbReference type="ChEBI" id="CHEBI:1178"/>
        <dbReference type="ChEBI" id="CHEBI:35121"/>
        <dbReference type="EC" id="4.2.1.33"/>
    </reaction>
</comment>
<comment type="cofactor">
    <cofactor evidence="1">
        <name>[4Fe-4S] cluster</name>
        <dbReference type="ChEBI" id="CHEBI:49883"/>
    </cofactor>
    <text evidence="1">Binds 1 [4Fe-4S] cluster per subunit.</text>
</comment>
<comment type="pathway">
    <text evidence="1">Amino-acid biosynthesis; L-leucine biosynthesis; L-leucine from 3-methyl-2-oxobutanoate: step 2/4.</text>
</comment>
<comment type="subunit">
    <text evidence="1">Heterodimer of LeuC and LeuD.</text>
</comment>
<comment type="similarity">
    <text evidence="1">Belongs to the aconitase/IPM isomerase family. LeuC type 1 subfamily.</text>
</comment>
<protein>
    <recommendedName>
        <fullName evidence="1">3-isopropylmalate dehydratase large subunit</fullName>
        <ecNumber evidence="1">4.2.1.33</ecNumber>
    </recommendedName>
    <alternativeName>
        <fullName evidence="1">Alpha-IPM isomerase</fullName>
        <shortName evidence="1">IPMI</shortName>
    </alternativeName>
    <alternativeName>
        <fullName evidence="1">Isopropylmalate isomerase</fullName>
    </alternativeName>
</protein>
<organism>
    <name type="scientific">Blochmanniella floridana</name>
    <dbReference type="NCBI Taxonomy" id="203907"/>
    <lineage>
        <taxon>Bacteria</taxon>
        <taxon>Pseudomonadati</taxon>
        <taxon>Pseudomonadota</taxon>
        <taxon>Gammaproteobacteria</taxon>
        <taxon>Enterobacterales</taxon>
        <taxon>Enterobacteriaceae</taxon>
        <taxon>ant endosymbionts</taxon>
        <taxon>Candidatus Blochmanniella</taxon>
    </lineage>
</organism>